<comment type="function">
    <text evidence="1">Component of the MITRAC (mitochondrial translation regulation assembly intermediate of cytochrome c oxidase complex) complex, that regulates cytochrome c oxidase assembly.</text>
</comment>
<comment type="subunit">
    <text evidence="2">Component of the MITRAC (mitochondrial translation regulation assembly intermediate of cytochrome c oxidase complex) complex, the core components of this complex being COA3/MITRAC12 and COX14.</text>
</comment>
<comment type="subcellular location">
    <subcellularLocation>
        <location evidence="2">Mitochondrion</location>
    </subcellularLocation>
    <text evidence="2">Colocalizes with MT-CO1.</text>
</comment>
<comment type="similarity">
    <text evidence="4">Belongs to the CMC family.</text>
</comment>
<comment type="sequence caution" evidence="4">
    <conflict type="erroneous initiation">
        <sequence resource="EMBL-CDS" id="AAH48547"/>
    </conflict>
</comment>
<protein>
    <recommendedName>
        <fullName>COX assembly mitochondrial protein homolog</fullName>
        <shortName>Cmc1p</shortName>
    </recommendedName>
</protein>
<dbReference type="EMBL" id="AK020626">
    <property type="protein sequence ID" value="BAB32155.1"/>
    <property type="molecule type" value="mRNA"/>
</dbReference>
<dbReference type="EMBL" id="AK168728">
    <property type="protein sequence ID" value="BAE40569.1"/>
    <property type="molecule type" value="mRNA"/>
</dbReference>
<dbReference type="EMBL" id="BC048547">
    <property type="protein sequence ID" value="AAH48547.1"/>
    <property type="status" value="ALT_INIT"/>
    <property type="molecule type" value="mRNA"/>
</dbReference>
<dbReference type="EMBL" id="BC056653">
    <property type="protein sequence ID" value="AAH56653.1"/>
    <property type="molecule type" value="mRNA"/>
</dbReference>
<dbReference type="CCDS" id="CCDS40800.1"/>
<dbReference type="RefSeq" id="NP_080718.1">
    <property type="nucleotide sequence ID" value="NM_026442.3"/>
</dbReference>
<dbReference type="SMR" id="Q9CPZ8"/>
<dbReference type="BioGRID" id="212523">
    <property type="interactions" value="9"/>
</dbReference>
<dbReference type="FunCoup" id="Q9CPZ8">
    <property type="interactions" value="707"/>
</dbReference>
<dbReference type="STRING" id="10090.ENSMUSP00000047904"/>
<dbReference type="GlyGen" id="Q9CPZ8">
    <property type="glycosylation" value="1 site, 1 O-linked glycan (1 site)"/>
</dbReference>
<dbReference type="iPTMnet" id="Q9CPZ8"/>
<dbReference type="PhosphoSitePlus" id="Q9CPZ8"/>
<dbReference type="SwissPalm" id="Q9CPZ8"/>
<dbReference type="jPOST" id="Q9CPZ8"/>
<dbReference type="PaxDb" id="10090-ENSMUSP00000047904"/>
<dbReference type="PeptideAtlas" id="Q9CPZ8"/>
<dbReference type="ProteomicsDB" id="285269"/>
<dbReference type="Pumba" id="Q9CPZ8"/>
<dbReference type="Antibodypedia" id="49957">
    <property type="antibodies" value="44 antibodies from 15 providers"/>
</dbReference>
<dbReference type="DNASU" id="67899"/>
<dbReference type="Ensembl" id="ENSMUST00000044220.11">
    <property type="protein sequence ID" value="ENSMUSP00000047904.10"/>
    <property type="gene ID" value="ENSMUSG00000039163.11"/>
</dbReference>
<dbReference type="GeneID" id="67899"/>
<dbReference type="KEGG" id="mmu:67899"/>
<dbReference type="UCSC" id="uc009rzl.2">
    <property type="organism name" value="mouse"/>
</dbReference>
<dbReference type="AGR" id="MGI:1915149"/>
<dbReference type="CTD" id="152100"/>
<dbReference type="MGI" id="MGI:1915149">
    <property type="gene designation" value="Cmc1"/>
</dbReference>
<dbReference type="VEuPathDB" id="HostDB:ENSMUSG00000039163"/>
<dbReference type="eggNOG" id="KOG4624">
    <property type="taxonomic scope" value="Eukaryota"/>
</dbReference>
<dbReference type="GeneTree" id="ENSGT00390000018696"/>
<dbReference type="HOGENOM" id="CLU_142621_1_1_1"/>
<dbReference type="InParanoid" id="Q9CPZ8"/>
<dbReference type="OMA" id="CCQETGF"/>
<dbReference type="OrthoDB" id="6224010at2759"/>
<dbReference type="PhylomeDB" id="Q9CPZ8"/>
<dbReference type="TreeFam" id="TF314632"/>
<dbReference type="Reactome" id="R-MMU-9864848">
    <property type="pathway name" value="Complex IV assembly"/>
</dbReference>
<dbReference type="BioGRID-ORCS" id="67899">
    <property type="hits" value="1 hit in 77 CRISPR screens"/>
</dbReference>
<dbReference type="ChiTaRS" id="Cmc1">
    <property type="organism name" value="mouse"/>
</dbReference>
<dbReference type="PRO" id="PR:Q9CPZ8"/>
<dbReference type="Proteomes" id="UP000000589">
    <property type="component" value="Chromosome 9"/>
</dbReference>
<dbReference type="RNAct" id="Q9CPZ8">
    <property type="molecule type" value="protein"/>
</dbReference>
<dbReference type="Bgee" id="ENSMUSG00000039163">
    <property type="expression patterns" value="Expressed in manus and 231 other cell types or tissues"/>
</dbReference>
<dbReference type="ExpressionAtlas" id="Q9CPZ8">
    <property type="expression patterns" value="baseline and differential"/>
</dbReference>
<dbReference type="GO" id="GO:0005739">
    <property type="term" value="C:mitochondrion"/>
    <property type="evidence" value="ECO:0007005"/>
    <property type="project" value="MGI"/>
</dbReference>
<dbReference type="GO" id="GO:0046872">
    <property type="term" value="F:metal ion binding"/>
    <property type="evidence" value="ECO:0007669"/>
    <property type="project" value="UniProtKB-KW"/>
</dbReference>
<dbReference type="InterPro" id="IPR013892">
    <property type="entry name" value="Cyt_c_biogenesis_Cmc1-like"/>
</dbReference>
<dbReference type="PANTHER" id="PTHR22977">
    <property type="entry name" value="COX ASSEMBLY MITOCHONDRIAL PROTEIN"/>
    <property type="match status" value="1"/>
</dbReference>
<dbReference type="PANTHER" id="PTHR22977:SF5">
    <property type="entry name" value="COX ASSEMBLY MITOCHONDRIAL PROTEIN HOMOLOG"/>
    <property type="match status" value="1"/>
</dbReference>
<dbReference type="Pfam" id="PF08583">
    <property type="entry name" value="Cmc1"/>
    <property type="match status" value="1"/>
</dbReference>
<dbReference type="PROSITE" id="PS51808">
    <property type="entry name" value="CHCH"/>
    <property type="match status" value="1"/>
</dbReference>
<sequence>MALDPAEQHLRHVEKDVLIPKIIREKARERCSEQVEDFTRCCKDSGILMVLKCRKENSALKDCLTAYYNDPAFYEECKLEYLKEREEFRKTGVPTKKRLQKLPTNM</sequence>
<keyword id="KW-0007">Acetylation</keyword>
<keyword id="KW-0186">Copper</keyword>
<keyword id="KW-1015">Disulfide bond</keyword>
<keyword id="KW-0479">Metal-binding</keyword>
<keyword id="KW-0496">Mitochondrion</keyword>
<keyword id="KW-1185">Reference proteome</keyword>
<organism>
    <name type="scientific">Mus musculus</name>
    <name type="common">Mouse</name>
    <dbReference type="NCBI Taxonomy" id="10090"/>
    <lineage>
        <taxon>Eukaryota</taxon>
        <taxon>Metazoa</taxon>
        <taxon>Chordata</taxon>
        <taxon>Craniata</taxon>
        <taxon>Vertebrata</taxon>
        <taxon>Euteleostomi</taxon>
        <taxon>Mammalia</taxon>
        <taxon>Eutheria</taxon>
        <taxon>Euarchontoglires</taxon>
        <taxon>Glires</taxon>
        <taxon>Rodentia</taxon>
        <taxon>Myomorpha</taxon>
        <taxon>Muroidea</taxon>
        <taxon>Muridae</taxon>
        <taxon>Murinae</taxon>
        <taxon>Mus</taxon>
        <taxon>Mus</taxon>
    </lineage>
</organism>
<feature type="initiator methionine" description="Removed" evidence="2">
    <location>
        <position position="1"/>
    </location>
</feature>
<feature type="chain" id="PRO_0000317186" description="COX assembly mitochondrial protein homolog">
    <location>
        <begin position="2"/>
        <end position="106"/>
    </location>
</feature>
<feature type="domain" description="CHCH" evidence="3">
    <location>
        <begin position="28"/>
        <end position="71"/>
    </location>
</feature>
<feature type="short sequence motif" description="Cx9C motif 1" evidence="3">
    <location>
        <begin position="31"/>
        <end position="41"/>
    </location>
</feature>
<feature type="short sequence motif" description="Cx9C motif 2" evidence="3">
    <location>
        <begin position="53"/>
        <end position="63"/>
    </location>
</feature>
<feature type="modified residue" description="N-acetylalanine" evidence="2">
    <location>
        <position position="2"/>
    </location>
</feature>
<feature type="disulfide bond" evidence="3">
    <location>
        <begin position="31"/>
        <end position="63"/>
    </location>
</feature>
<feature type="disulfide bond" evidence="3">
    <location>
        <begin position="41"/>
        <end position="53"/>
    </location>
</feature>
<feature type="sequence conflict" description="In Ref. 2; AAH56653." evidence="4" ref="2">
    <original>I</original>
    <variation>M</variation>
    <location>
        <position position="23"/>
    </location>
</feature>
<proteinExistence type="evidence at protein level"/>
<accession>Q9CPZ8</accession>
<accession>Q6PH95</accession>
<accession>Q80ZR0</accession>
<name>COXM1_MOUSE</name>
<evidence type="ECO:0000250" key="1"/>
<evidence type="ECO:0000250" key="2">
    <source>
        <dbReference type="UniProtKB" id="Q7Z7K0"/>
    </source>
</evidence>
<evidence type="ECO:0000255" key="3">
    <source>
        <dbReference type="PROSITE-ProRule" id="PRU01150"/>
    </source>
</evidence>
<evidence type="ECO:0000305" key="4"/>
<gene>
    <name type="primary">Cmc1</name>
</gene>
<reference key="1">
    <citation type="journal article" date="2005" name="Science">
        <title>The transcriptional landscape of the mammalian genome.</title>
        <authorList>
            <person name="Carninci P."/>
            <person name="Kasukawa T."/>
            <person name="Katayama S."/>
            <person name="Gough J."/>
            <person name="Frith M.C."/>
            <person name="Maeda N."/>
            <person name="Oyama R."/>
            <person name="Ravasi T."/>
            <person name="Lenhard B."/>
            <person name="Wells C."/>
            <person name="Kodzius R."/>
            <person name="Shimokawa K."/>
            <person name="Bajic V.B."/>
            <person name="Brenner S.E."/>
            <person name="Batalov S."/>
            <person name="Forrest A.R."/>
            <person name="Zavolan M."/>
            <person name="Davis M.J."/>
            <person name="Wilming L.G."/>
            <person name="Aidinis V."/>
            <person name="Allen J.E."/>
            <person name="Ambesi-Impiombato A."/>
            <person name="Apweiler R."/>
            <person name="Aturaliya R.N."/>
            <person name="Bailey T.L."/>
            <person name="Bansal M."/>
            <person name="Baxter L."/>
            <person name="Beisel K.W."/>
            <person name="Bersano T."/>
            <person name="Bono H."/>
            <person name="Chalk A.M."/>
            <person name="Chiu K.P."/>
            <person name="Choudhary V."/>
            <person name="Christoffels A."/>
            <person name="Clutterbuck D.R."/>
            <person name="Crowe M.L."/>
            <person name="Dalla E."/>
            <person name="Dalrymple B.P."/>
            <person name="de Bono B."/>
            <person name="Della Gatta G."/>
            <person name="di Bernardo D."/>
            <person name="Down T."/>
            <person name="Engstrom P."/>
            <person name="Fagiolini M."/>
            <person name="Faulkner G."/>
            <person name="Fletcher C.F."/>
            <person name="Fukushima T."/>
            <person name="Furuno M."/>
            <person name="Futaki S."/>
            <person name="Gariboldi M."/>
            <person name="Georgii-Hemming P."/>
            <person name="Gingeras T.R."/>
            <person name="Gojobori T."/>
            <person name="Green R.E."/>
            <person name="Gustincich S."/>
            <person name="Harbers M."/>
            <person name="Hayashi Y."/>
            <person name="Hensch T.K."/>
            <person name="Hirokawa N."/>
            <person name="Hill D."/>
            <person name="Huminiecki L."/>
            <person name="Iacono M."/>
            <person name="Ikeo K."/>
            <person name="Iwama A."/>
            <person name="Ishikawa T."/>
            <person name="Jakt M."/>
            <person name="Kanapin A."/>
            <person name="Katoh M."/>
            <person name="Kawasawa Y."/>
            <person name="Kelso J."/>
            <person name="Kitamura H."/>
            <person name="Kitano H."/>
            <person name="Kollias G."/>
            <person name="Krishnan S.P."/>
            <person name="Kruger A."/>
            <person name="Kummerfeld S.K."/>
            <person name="Kurochkin I.V."/>
            <person name="Lareau L.F."/>
            <person name="Lazarevic D."/>
            <person name="Lipovich L."/>
            <person name="Liu J."/>
            <person name="Liuni S."/>
            <person name="McWilliam S."/>
            <person name="Madan Babu M."/>
            <person name="Madera M."/>
            <person name="Marchionni L."/>
            <person name="Matsuda H."/>
            <person name="Matsuzawa S."/>
            <person name="Miki H."/>
            <person name="Mignone F."/>
            <person name="Miyake S."/>
            <person name="Morris K."/>
            <person name="Mottagui-Tabar S."/>
            <person name="Mulder N."/>
            <person name="Nakano N."/>
            <person name="Nakauchi H."/>
            <person name="Ng P."/>
            <person name="Nilsson R."/>
            <person name="Nishiguchi S."/>
            <person name="Nishikawa S."/>
            <person name="Nori F."/>
            <person name="Ohara O."/>
            <person name="Okazaki Y."/>
            <person name="Orlando V."/>
            <person name="Pang K.C."/>
            <person name="Pavan W.J."/>
            <person name="Pavesi G."/>
            <person name="Pesole G."/>
            <person name="Petrovsky N."/>
            <person name="Piazza S."/>
            <person name="Reed J."/>
            <person name="Reid J.F."/>
            <person name="Ring B.Z."/>
            <person name="Ringwald M."/>
            <person name="Rost B."/>
            <person name="Ruan Y."/>
            <person name="Salzberg S.L."/>
            <person name="Sandelin A."/>
            <person name="Schneider C."/>
            <person name="Schoenbach C."/>
            <person name="Sekiguchi K."/>
            <person name="Semple C.A."/>
            <person name="Seno S."/>
            <person name="Sessa L."/>
            <person name="Sheng Y."/>
            <person name="Shibata Y."/>
            <person name="Shimada H."/>
            <person name="Shimada K."/>
            <person name="Silva D."/>
            <person name="Sinclair B."/>
            <person name="Sperling S."/>
            <person name="Stupka E."/>
            <person name="Sugiura K."/>
            <person name="Sultana R."/>
            <person name="Takenaka Y."/>
            <person name="Taki K."/>
            <person name="Tammoja K."/>
            <person name="Tan S.L."/>
            <person name="Tang S."/>
            <person name="Taylor M.S."/>
            <person name="Tegner J."/>
            <person name="Teichmann S.A."/>
            <person name="Ueda H.R."/>
            <person name="van Nimwegen E."/>
            <person name="Verardo R."/>
            <person name="Wei C.L."/>
            <person name="Yagi K."/>
            <person name="Yamanishi H."/>
            <person name="Zabarovsky E."/>
            <person name="Zhu S."/>
            <person name="Zimmer A."/>
            <person name="Hide W."/>
            <person name="Bult C."/>
            <person name="Grimmond S.M."/>
            <person name="Teasdale R.D."/>
            <person name="Liu E.T."/>
            <person name="Brusic V."/>
            <person name="Quackenbush J."/>
            <person name="Wahlestedt C."/>
            <person name="Mattick J.S."/>
            <person name="Hume D.A."/>
            <person name="Kai C."/>
            <person name="Sasaki D."/>
            <person name="Tomaru Y."/>
            <person name="Fukuda S."/>
            <person name="Kanamori-Katayama M."/>
            <person name="Suzuki M."/>
            <person name="Aoki J."/>
            <person name="Arakawa T."/>
            <person name="Iida J."/>
            <person name="Imamura K."/>
            <person name="Itoh M."/>
            <person name="Kato T."/>
            <person name="Kawaji H."/>
            <person name="Kawagashira N."/>
            <person name="Kawashima T."/>
            <person name="Kojima M."/>
            <person name="Kondo S."/>
            <person name="Konno H."/>
            <person name="Nakano K."/>
            <person name="Ninomiya N."/>
            <person name="Nishio T."/>
            <person name="Okada M."/>
            <person name="Plessy C."/>
            <person name="Shibata K."/>
            <person name="Shiraki T."/>
            <person name="Suzuki S."/>
            <person name="Tagami M."/>
            <person name="Waki K."/>
            <person name="Watahiki A."/>
            <person name="Okamura-Oho Y."/>
            <person name="Suzuki H."/>
            <person name="Kawai J."/>
            <person name="Hayashizaki Y."/>
        </authorList>
    </citation>
    <scope>NUCLEOTIDE SEQUENCE [LARGE SCALE MRNA]</scope>
    <source>
        <strain>C57BL/6J</strain>
        <tissue>Heart</tissue>
        <tissue>Urinary bladder</tissue>
    </source>
</reference>
<reference key="2">
    <citation type="journal article" date="2004" name="Genome Res.">
        <title>The status, quality, and expansion of the NIH full-length cDNA project: the Mammalian Gene Collection (MGC).</title>
        <authorList>
            <consortium name="The MGC Project Team"/>
        </authorList>
    </citation>
    <scope>NUCLEOTIDE SEQUENCE [LARGE SCALE MRNA]</scope>
    <source>
        <strain>Czech II</strain>
        <tissue>Brain</tissue>
        <tissue>Mammary tumor</tissue>
    </source>
</reference>
<reference key="3">
    <citation type="journal article" date="2010" name="Cell">
        <title>A tissue-specific atlas of mouse protein phosphorylation and expression.</title>
        <authorList>
            <person name="Huttlin E.L."/>
            <person name="Jedrychowski M.P."/>
            <person name="Elias J.E."/>
            <person name="Goswami T."/>
            <person name="Rad R."/>
            <person name="Beausoleil S.A."/>
            <person name="Villen J."/>
            <person name="Haas W."/>
            <person name="Sowa M.E."/>
            <person name="Gygi S.P."/>
        </authorList>
    </citation>
    <scope>IDENTIFICATION BY MASS SPECTROMETRY [LARGE SCALE ANALYSIS]</scope>
    <source>
        <tissue>Brown adipose tissue</tissue>
    </source>
</reference>